<protein>
    <recommendedName>
        <fullName>HTH-type transcriptional regulator CysB</fullName>
    </recommendedName>
    <alternativeName>
        <fullName>Cys regulon transcriptional activator</fullName>
    </alternativeName>
</protein>
<gene>
    <name type="primary">cysB</name>
    <name type="ordered locus">HI_1200</name>
</gene>
<dbReference type="EMBL" id="L42023">
    <property type="protein sequence ID" value="AAC22854.1"/>
    <property type="molecule type" value="Genomic_DNA"/>
</dbReference>
<dbReference type="PIR" id="E64189">
    <property type="entry name" value="E64189"/>
</dbReference>
<dbReference type="RefSeq" id="NP_439356.1">
    <property type="nucleotide sequence ID" value="NC_000907.1"/>
</dbReference>
<dbReference type="SMR" id="P45105"/>
<dbReference type="STRING" id="71421.HI_1200"/>
<dbReference type="EnsemblBacteria" id="AAC22854">
    <property type="protein sequence ID" value="AAC22854"/>
    <property type="gene ID" value="HI_1200"/>
</dbReference>
<dbReference type="KEGG" id="hin:HI_1200"/>
<dbReference type="PATRIC" id="fig|71421.8.peg.1252"/>
<dbReference type="eggNOG" id="COG0583">
    <property type="taxonomic scope" value="Bacteria"/>
</dbReference>
<dbReference type="HOGENOM" id="CLU_039613_6_2_6"/>
<dbReference type="OrthoDB" id="5297026at2"/>
<dbReference type="PhylomeDB" id="P45105"/>
<dbReference type="BioCyc" id="HINF71421:G1GJ1-1231-MONOMER"/>
<dbReference type="Proteomes" id="UP000000579">
    <property type="component" value="Chromosome"/>
</dbReference>
<dbReference type="GO" id="GO:0005737">
    <property type="term" value="C:cytoplasm"/>
    <property type="evidence" value="ECO:0007669"/>
    <property type="project" value="UniProtKB-SubCell"/>
</dbReference>
<dbReference type="GO" id="GO:0003700">
    <property type="term" value="F:DNA-binding transcription factor activity"/>
    <property type="evidence" value="ECO:0007669"/>
    <property type="project" value="InterPro"/>
</dbReference>
<dbReference type="GO" id="GO:0000976">
    <property type="term" value="F:transcription cis-regulatory region binding"/>
    <property type="evidence" value="ECO:0000318"/>
    <property type="project" value="GO_Central"/>
</dbReference>
<dbReference type="GO" id="GO:0019344">
    <property type="term" value="P:cysteine biosynthetic process"/>
    <property type="evidence" value="ECO:0000318"/>
    <property type="project" value="GO_Central"/>
</dbReference>
<dbReference type="GO" id="GO:0006355">
    <property type="term" value="P:regulation of DNA-templated transcription"/>
    <property type="evidence" value="ECO:0000318"/>
    <property type="project" value="GO_Central"/>
</dbReference>
<dbReference type="CDD" id="cd08413">
    <property type="entry name" value="PBP2_CysB_like"/>
    <property type="match status" value="1"/>
</dbReference>
<dbReference type="Gene3D" id="3.40.190.10">
    <property type="entry name" value="Periplasmic binding protein-like II"/>
    <property type="match status" value="2"/>
</dbReference>
<dbReference type="Gene3D" id="1.10.10.10">
    <property type="entry name" value="Winged helix-like DNA-binding domain superfamily/Winged helix DNA-binding domain"/>
    <property type="match status" value="1"/>
</dbReference>
<dbReference type="InterPro" id="IPR037423">
    <property type="entry name" value="CysB_PBP2"/>
</dbReference>
<dbReference type="InterPro" id="IPR005119">
    <property type="entry name" value="LysR_subst-bd"/>
</dbReference>
<dbReference type="InterPro" id="IPR000847">
    <property type="entry name" value="Tscrpt_reg_HTH_LysR"/>
</dbReference>
<dbReference type="InterPro" id="IPR036388">
    <property type="entry name" value="WH-like_DNA-bd_sf"/>
</dbReference>
<dbReference type="InterPro" id="IPR036390">
    <property type="entry name" value="WH_DNA-bd_sf"/>
</dbReference>
<dbReference type="NCBIfam" id="NF009326">
    <property type="entry name" value="PRK12681.1"/>
    <property type="match status" value="1"/>
</dbReference>
<dbReference type="NCBIfam" id="NF009327">
    <property type="entry name" value="PRK12684.1"/>
    <property type="match status" value="1"/>
</dbReference>
<dbReference type="PANTHER" id="PTHR30126">
    <property type="entry name" value="HTH-TYPE TRANSCRIPTIONAL REGULATOR"/>
    <property type="match status" value="1"/>
</dbReference>
<dbReference type="PANTHER" id="PTHR30126:SF6">
    <property type="entry name" value="HTH-TYPE TRANSCRIPTIONAL REGULATOR CYSB-RELATED"/>
    <property type="match status" value="1"/>
</dbReference>
<dbReference type="Pfam" id="PF00126">
    <property type="entry name" value="HTH_1"/>
    <property type="match status" value="1"/>
</dbReference>
<dbReference type="Pfam" id="PF03466">
    <property type="entry name" value="LysR_substrate"/>
    <property type="match status" value="1"/>
</dbReference>
<dbReference type="PRINTS" id="PR00039">
    <property type="entry name" value="HTHLYSR"/>
</dbReference>
<dbReference type="SUPFAM" id="SSF53850">
    <property type="entry name" value="Periplasmic binding protein-like II"/>
    <property type="match status" value="1"/>
</dbReference>
<dbReference type="SUPFAM" id="SSF46785">
    <property type="entry name" value="Winged helix' DNA-binding domain"/>
    <property type="match status" value="1"/>
</dbReference>
<dbReference type="PROSITE" id="PS50931">
    <property type="entry name" value="HTH_LYSR"/>
    <property type="match status" value="1"/>
</dbReference>
<name>CYSB_HAEIN</name>
<organism>
    <name type="scientific">Haemophilus influenzae (strain ATCC 51907 / DSM 11121 / KW20 / Rd)</name>
    <dbReference type="NCBI Taxonomy" id="71421"/>
    <lineage>
        <taxon>Bacteria</taxon>
        <taxon>Pseudomonadati</taxon>
        <taxon>Pseudomonadota</taxon>
        <taxon>Gammaproteobacteria</taxon>
        <taxon>Pasteurellales</taxon>
        <taxon>Pasteurellaceae</taxon>
        <taxon>Haemophilus</taxon>
    </lineage>
</organism>
<sequence length="323" mass="36485">MKMHQLRYIVEIVNQNLNVTEAANALYTSQPGISKQVRLLEDELGLEIFERHGKHIKSITPAGKKIISIARELLVKAQGIRAVADEYTRPNHGVLRIATTNTQARYMLPSVIERFSKKYPDVSLHIHQGSPTQIHDALMSGEVDLAITTEAPYLFDDLVQIPCYWWNRAVIVSPEHPLAKVKELTIEELGKYPLVTYTFGFTGVSDLDYAFNSAGILPNIVFTATDADVIKTYVRLGLGVGIMASMAHTALDTDLVLIDASHLFRPSMTNIAFKHSTFLRNYMYDFMEYFSPHLTRSVVEKAERLRDNNSVKKLFEGIELETK</sequence>
<accession>P45105</accession>
<keyword id="KW-0010">Activator</keyword>
<keyword id="KW-0028">Amino-acid biosynthesis</keyword>
<keyword id="KW-0198">Cysteine biosynthesis</keyword>
<keyword id="KW-0963">Cytoplasm</keyword>
<keyword id="KW-0238">DNA-binding</keyword>
<keyword id="KW-1185">Reference proteome</keyword>
<keyword id="KW-0804">Transcription</keyword>
<keyword id="KW-0805">Transcription regulation</keyword>
<evidence type="ECO:0000250" key="1"/>
<evidence type="ECO:0000255" key="2">
    <source>
        <dbReference type="PROSITE-ProRule" id="PRU00253"/>
    </source>
</evidence>
<evidence type="ECO:0000305" key="3"/>
<proteinExistence type="inferred from homology"/>
<feature type="chain" id="PRO_0000105617" description="HTH-type transcriptional regulator CysB">
    <location>
        <begin position="1"/>
        <end position="323"/>
    </location>
</feature>
<feature type="domain" description="HTH lysR-type" evidence="2">
    <location>
        <begin position="1"/>
        <end position="60"/>
    </location>
</feature>
<feature type="DNA-binding region" description="H-T-H motif" evidence="2">
    <location>
        <begin position="19"/>
        <end position="38"/>
    </location>
</feature>
<reference key="1">
    <citation type="journal article" date="1995" name="Science">
        <title>Whole-genome random sequencing and assembly of Haemophilus influenzae Rd.</title>
        <authorList>
            <person name="Fleischmann R.D."/>
            <person name="Adams M.D."/>
            <person name="White O."/>
            <person name="Clayton R.A."/>
            <person name="Kirkness E.F."/>
            <person name="Kerlavage A.R."/>
            <person name="Bult C.J."/>
            <person name="Tomb J.-F."/>
            <person name="Dougherty B.A."/>
            <person name="Merrick J.M."/>
            <person name="McKenney K."/>
            <person name="Sutton G.G."/>
            <person name="FitzHugh W."/>
            <person name="Fields C.A."/>
            <person name="Gocayne J.D."/>
            <person name="Scott J.D."/>
            <person name="Shirley R."/>
            <person name="Liu L.-I."/>
            <person name="Glodek A."/>
            <person name="Kelley J.M."/>
            <person name="Weidman J.F."/>
            <person name="Phillips C.A."/>
            <person name="Spriggs T."/>
            <person name="Hedblom E."/>
            <person name="Cotton M.D."/>
            <person name="Utterback T.R."/>
            <person name="Hanna M.C."/>
            <person name="Nguyen D.T."/>
            <person name="Saudek D.M."/>
            <person name="Brandon R.C."/>
            <person name="Fine L.D."/>
            <person name="Fritchman J.L."/>
            <person name="Fuhrmann J.L."/>
            <person name="Geoghagen N.S.M."/>
            <person name="Gnehm C.L."/>
            <person name="McDonald L.A."/>
            <person name="Small K.V."/>
            <person name="Fraser C.M."/>
            <person name="Smith H.O."/>
            <person name="Venter J.C."/>
        </authorList>
    </citation>
    <scope>NUCLEOTIDE SEQUENCE [LARGE SCALE GENOMIC DNA]</scope>
    <source>
        <strain>ATCC 51907 / DSM 11121 / KW20 / Rd</strain>
    </source>
</reference>
<comment type="function">
    <text evidence="1">This protein is a positive regulator of gene expression for the cysteine regulon. The inducer for CysB is N-acetylserine (By similarity).</text>
</comment>
<comment type="subunit">
    <text evidence="1">Homotetramer.</text>
</comment>
<comment type="subcellular location">
    <subcellularLocation>
        <location evidence="1">Cytoplasm</location>
    </subcellularLocation>
</comment>
<comment type="similarity">
    <text evidence="3">Belongs to the LysR transcriptional regulatory family.</text>
</comment>